<sequence>MHLLSSLAALAAAITVAFADVQQCNAENASVRKEWGSLTPDEQLGYIDAVWCLRSLPSRLPNEQYPGVQDRVDDFVATHINLTMVIHRNAPFLPWHRQYIHLWETALREECGYNGTVPYWNWTKNPDLYTNPVFDTTQSPETSLSLSGDGAYVAPSPTDPDPDPGLDFAPGRGGGCVLDGPFKDWPVRMGPFSAAQAYPYAPVPENAFAHNPRCLQRNLDVARIQYYNNPSVLESLLAAPSIAVFQDILDRTIPGTWQQAIGAHGGGHISVGPTLADVFASPQDPVFMLHHGFIDLLWDAWQRSGSDTGEGTDRMRALNGTTMYTNPPGAEEATLDTVMEFGVLGSPKKIGEVMDIRGGEYCYRYE</sequence>
<dbReference type="EC" id="1.14.-.-" evidence="6"/>
<dbReference type="EMBL" id="BN001308">
    <property type="protein sequence ID" value="CBF89919.1"/>
    <property type="molecule type" value="Genomic_DNA"/>
</dbReference>
<dbReference type="RefSeq" id="XP_657835.1">
    <property type="nucleotide sequence ID" value="XM_652743.1"/>
</dbReference>
<dbReference type="SMR" id="Q5BGU9"/>
<dbReference type="STRING" id="227321.Q5BGU9"/>
<dbReference type="GlyCosmos" id="Q5BGU9">
    <property type="glycosylation" value="5 sites, No reported glycans"/>
</dbReference>
<dbReference type="EnsemblFungi" id="CBF89919">
    <property type="protein sequence ID" value="CBF89919"/>
    <property type="gene ID" value="ANIA_00231"/>
</dbReference>
<dbReference type="GeneID" id="2876009"/>
<dbReference type="KEGG" id="ani:ANIA_00231"/>
<dbReference type="eggNOG" id="ENOG502RM4B">
    <property type="taxonomic scope" value="Eukaryota"/>
</dbReference>
<dbReference type="HOGENOM" id="CLU_035914_0_0_1"/>
<dbReference type="InParanoid" id="Q5BGU9"/>
<dbReference type="OMA" id="PNDQYPG"/>
<dbReference type="OrthoDB" id="6132182at2759"/>
<dbReference type="Proteomes" id="UP000000560">
    <property type="component" value="Chromosome VIII"/>
</dbReference>
<dbReference type="GO" id="GO:0046872">
    <property type="term" value="F:metal ion binding"/>
    <property type="evidence" value="ECO:0007669"/>
    <property type="project" value="UniProtKB-KW"/>
</dbReference>
<dbReference type="GO" id="GO:0004497">
    <property type="term" value="F:monooxygenase activity"/>
    <property type="evidence" value="ECO:0007669"/>
    <property type="project" value="UniProtKB-KW"/>
</dbReference>
<dbReference type="Gene3D" id="1.10.1280.10">
    <property type="entry name" value="Di-copper center containing domain from catechol oxidase"/>
    <property type="match status" value="1"/>
</dbReference>
<dbReference type="InterPro" id="IPR008922">
    <property type="entry name" value="Di-copper_centre_dom_sf"/>
</dbReference>
<dbReference type="InterPro" id="IPR050316">
    <property type="entry name" value="Tyrosinase/Hemocyanin"/>
</dbReference>
<dbReference type="InterPro" id="IPR002227">
    <property type="entry name" value="Tyrosinase_Cu-bd"/>
</dbReference>
<dbReference type="PANTHER" id="PTHR11474:SF125">
    <property type="entry name" value="N-ACETYL-6-HYDROXYTRYPTOPHAN OXIDASE IVOB-RELATED"/>
    <property type="match status" value="1"/>
</dbReference>
<dbReference type="PANTHER" id="PTHR11474">
    <property type="entry name" value="TYROSINASE FAMILY MEMBER"/>
    <property type="match status" value="1"/>
</dbReference>
<dbReference type="Pfam" id="PF00264">
    <property type="entry name" value="Tyrosinase"/>
    <property type="match status" value="1"/>
</dbReference>
<dbReference type="PRINTS" id="PR00092">
    <property type="entry name" value="TYROSINASE"/>
</dbReference>
<dbReference type="SUPFAM" id="SSF48056">
    <property type="entry name" value="Di-copper centre-containing domain"/>
    <property type="match status" value="1"/>
</dbReference>
<dbReference type="PROSITE" id="PS00498">
    <property type="entry name" value="TYROSINASE_2"/>
    <property type="match status" value="1"/>
</dbReference>
<reference key="1">
    <citation type="journal article" date="2005" name="Nature">
        <title>Sequencing of Aspergillus nidulans and comparative analysis with A. fumigatus and A. oryzae.</title>
        <authorList>
            <person name="Galagan J.E."/>
            <person name="Calvo S.E."/>
            <person name="Cuomo C."/>
            <person name="Ma L.-J."/>
            <person name="Wortman J.R."/>
            <person name="Batzoglou S."/>
            <person name="Lee S.-I."/>
            <person name="Bastuerkmen M."/>
            <person name="Spevak C.C."/>
            <person name="Clutterbuck J."/>
            <person name="Kapitonov V."/>
            <person name="Jurka J."/>
            <person name="Scazzocchio C."/>
            <person name="Farman M.L."/>
            <person name="Butler J."/>
            <person name="Purcell S."/>
            <person name="Harris S."/>
            <person name="Braus G.H."/>
            <person name="Draht O."/>
            <person name="Busch S."/>
            <person name="D'Enfert C."/>
            <person name="Bouchier C."/>
            <person name="Goldman G.H."/>
            <person name="Bell-Pedersen D."/>
            <person name="Griffiths-Jones S."/>
            <person name="Doonan J.H."/>
            <person name="Yu J."/>
            <person name="Vienken K."/>
            <person name="Pain A."/>
            <person name="Freitag M."/>
            <person name="Selker E.U."/>
            <person name="Archer D.B."/>
            <person name="Penalva M.A."/>
            <person name="Oakley B.R."/>
            <person name="Momany M."/>
            <person name="Tanaka T."/>
            <person name="Kumagai T."/>
            <person name="Asai K."/>
            <person name="Machida M."/>
            <person name="Nierman W.C."/>
            <person name="Denning D.W."/>
            <person name="Caddick M.X."/>
            <person name="Hynes M."/>
            <person name="Paoletti M."/>
            <person name="Fischer R."/>
            <person name="Miller B.L."/>
            <person name="Dyer P.S."/>
            <person name="Sachs M.S."/>
            <person name="Osmani S.A."/>
            <person name="Birren B.W."/>
        </authorList>
    </citation>
    <scope>NUCLEOTIDE SEQUENCE [LARGE SCALE GENOMIC DNA]</scope>
    <source>
        <strain>FGSC A4 / ATCC 38163 / CBS 112.46 / NRRL 194 / M139</strain>
    </source>
</reference>
<reference key="2">
    <citation type="journal article" date="2009" name="Fungal Genet. Biol.">
        <title>The 2008 update of the Aspergillus nidulans genome annotation: a community effort.</title>
        <authorList>
            <person name="Wortman J.R."/>
            <person name="Gilsenan J.M."/>
            <person name="Joardar V."/>
            <person name="Deegan J."/>
            <person name="Clutterbuck J."/>
            <person name="Andersen M.R."/>
            <person name="Archer D."/>
            <person name="Bencina M."/>
            <person name="Braus G."/>
            <person name="Coutinho P."/>
            <person name="von Dohren H."/>
            <person name="Doonan J."/>
            <person name="Driessen A.J."/>
            <person name="Durek P."/>
            <person name="Espeso E."/>
            <person name="Fekete E."/>
            <person name="Flipphi M."/>
            <person name="Estrada C.G."/>
            <person name="Geysens S."/>
            <person name="Goldman G."/>
            <person name="de Groot P.W."/>
            <person name="Hansen K."/>
            <person name="Harris S.D."/>
            <person name="Heinekamp T."/>
            <person name="Helmstaedt K."/>
            <person name="Henrissat B."/>
            <person name="Hofmann G."/>
            <person name="Homan T."/>
            <person name="Horio T."/>
            <person name="Horiuchi H."/>
            <person name="James S."/>
            <person name="Jones M."/>
            <person name="Karaffa L."/>
            <person name="Karanyi Z."/>
            <person name="Kato M."/>
            <person name="Keller N."/>
            <person name="Kelly D.E."/>
            <person name="Kiel J.A."/>
            <person name="Kim J.M."/>
            <person name="van der Klei I.J."/>
            <person name="Klis F.M."/>
            <person name="Kovalchuk A."/>
            <person name="Krasevec N."/>
            <person name="Kubicek C.P."/>
            <person name="Liu B."/>
            <person name="Maccabe A."/>
            <person name="Meyer V."/>
            <person name="Mirabito P."/>
            <person name="Miskei M."/>
            <person name="Mos M."/>
            <person name="Mullins J."/>
            <person name="Nelson D.R."/>
            <person name="Nielsen J."/>
            <person name="Oakley B.R."/>
            <person name="Osmani S.A."/>
            <person name="Pakula T."/>
            <person name="Paszewski A."/>
            <person name="Paulsen I."/>
            <person name="Pilsyk S."/>
            <person name="Pocsi I."/>
            <person name="Punt P.J."/>
            <person name="Ram A.F."/>
            <person name="Ren Q."/>
            <person name="Robellet X."/>
            <person name="Robson G."/>
            <person name="Seiboth B."/>
            <person name="van Solingen P."/>
            <person name="Specht T."/>
            <person name="Sun J."/>
            <person name="Taheri-Talesh N."/>
            <person name="Takeshita N."/>
            <person name="Ussery D."/>
            <person name="vanKuyk P.A."/>
            <person name="Visser H."/>
            <person name="van de Vondervoort P.J."/>
            <person name="de Vries R.P."/>
            <person name="Walton J."/>
            <person name="Xiang X."/>
            <person name="Xiong Y."/>
            <person name="Zeng A.P."/>
            <person name="Brandt B.W."/>
            <person name="Cornell M.J."/>
            <person name="van den Hondel C.A."/>
            <person name="Visser J."/>
            <person name="Oliver S.G."/>
            <person name="Turner G."/>
        </authorList>
    </citation>
    <scope>GENOME REANNOTATION</scope>
    <source>
        <strain>FGSC A4 / ATCC 38163 / CBS 112.46 / NRRL 194 / M139</strain>
    </source>
</reference>
<reference key="3">
    <citation type="journal article" date="1990" name="J. Gen. Microbiol.">
        <title>N-acetyl-6-hydroxytryptophan oxidase, a developmentally controlled phenol oxidase from Aspergillus nidulans.</title>
        <authorList>
            <person name="Birse C.E."/>
            <person name="Clutterbuck A.J."/>
        </authorList>
    </citation>
    <scope>PROTEIN SEQUENCE OF 19-53</scope>
    <scope>FUNCTION</scope>
    <scope>CATALYTIC ACTIVITY</scope>
    <scope>BIOPHYSICOCHEMICAL PROPERTIES</scope>
    <scope>ACTIVITY REGULATION</scope>
    <scope>PATHWAY</scope>
</reference>
<reference key="4">
    <citation type="journal article" date="1983" name="Phytochemistry">
        <title>N-acetyl-6-hydroxytryptophan a natural substrate of a monophenol oxidase from Aspergillus nidulans.</title>
        <authorList>
            <person name="McCorkindale N.J."/>
            <person name="Hayes D."/>
            <person name="Johnston G.A."/>
            <person name="Clutterbuck A.J."/>
        </authorList>
    </citation>
    <scope>FUNCTION</scope>
    <scope>DISRUPTION PHENOTYPE</scope>
    <scope>PATHWAY</scope>
</reference>
<reference key="5">
    <citation type="journal article" date="2013" name="BMC Microbiol.">
        <title>Comprehensive annotation of secondary metabolite biosynthetic genes and gene clusters of Aspergillus nidulans, A. fumigatus, A. niger and A. oryzae.</title>
        <authorList>
            <person name="Inglis D.O."/>
            <person name="Binkley J."/>
            <person name="Skrzypek M.S."/>
            <person name="Arnaud M.B."/>
            <person name="Cerqueira G.C."/>
            <person name="Shah P."/>
            <person name="Wymore F."/>
            <person name="Wortman J.R."/>
            <person name="Sherlock G."/>
        </authorList>
    </citation>
    <scope>IDENTIFICATION OF THE IVO CLUSTER</scope>
</reference>
<reference key="6">
    <citation type="journal article" date="2017" name="Fungal Genet. Biol.">
        <title>Overexpression of a three-gene conidial pigment biosynthetic pathway in Aspergillus nidulans reveals the first NRPS known to acetylate tryptophan.</title>
        <authorList>
            <person name="Sung C.T."/>
            <person name="Chang S.L."/>
            <person name="Entwistle R."/>
            <person name="Ahn G."/>
            <person name="Lin T.S."/>
            <person name="Petrova V."/>
            <person name="Yeh H.H."/>
            <person name="Praseuth M.B."/>
            <person name="Chiang Y.M."/>
            <person name="Oakley B.R."/>
            <person name="Wang C.C.C."/>
        </authorList>
    </citation>
    <scope>FUNCTION</scope>
    <scope>PATHWAY</scope>
</reference>
<reference key="7">
    <citation type="journal article" date="2019" name="J. Am. Chem. Soc.">
        <title>Complete stereoinversion of L-tryptophan by a fungal single-module nonribosomal peptide synthetase.</title>
        <authorList>
            <person name="Hai Y."/>
            <person name="Jenner M."/>
            <person name="Tang Y."/>
        </authorList>
    </citation>
    <scope>FUNCTION</scope>
</reference>
<protein>
    <recommendedName>
        <fullName evidence="10">N-acetyl-6-hydroxytryptophan oxidase ivoB</fullName>
        <shortName evidence="10">AHTase ivoB</shortName>
        <ecNumber evidence="6">1.14.-.-</ecNumber>
    </recommendedName>
    <alternativeName>
        <fullName evidence="11">Ivory mutation-related protein B</fullName>
    </alternativeName>
    <alternativeName>
        <fullName evidence="9">Monophenol oxidase</fullName>
    </alternativeName>
</protein>
<name>IVOB_EMENI</name>
<gene>
    <name evidence="10" type="primary">ivoB</name>
    <name type="ORF">ANIA_00231</name>
</gene>
<keyword id="KW-0186">Copper</keyword>
<keyword id="KW-0903">Direct protein sequencing</keyword>
<keyword id="KW-0325">Glycoprotein</keyword>
<keyword id="KW-0479">Metal-binding</keyword>
<keyword id="KW-0503">Monooxygenase</keyword>
<keyword id="KW-0560">Oxidoreductase</keyword>
<keyword id="KW-1185">Reference proteome</keyword>
<keyword id="KW-0732">Signal</keyword>
<organism>
    <name type="scientific">Emericella nidulans (strain FGSC A4 / ATCC 38163 / CBS 112.46 / NRRL 194 / M139)</name>
    <name type="common">Aspergillus nidulans</name>
    <dbReference type="NCBI Taxonomy" id="227321"/>
    <lineage>
        <taxon>Eukaryota</taxon>
        <taxon>Fungi</taxon>
        <taxon>Dikarya</taxon>
        <taxon>Ascomycota</taxon>
        <taxon>Pezizomycotina</taxon>
        <taxon>Eurotiomycetes</taxon>
        <taxon>Eurotiomycetidae</taxon>
        <taxon>Eurotiales</taxon>
        <taxon>Aspergillaceae</taxon>
        <taxon>Aspergillus</taxon>
        <taxon>Aspergillus subgen. Nidulantes</taxon>
    </lineage>
</organism>
<feature type="signal peptide" evidence="4">
    <location>
        <begin position="1"/>
        <end position="18"/>
    </location>
</feature>
<feature type="chain" id="PRO_5010255833" description="N-acetyl-6-hydroxytryptophan oxidase ivoB" evidence="2">
    <location>
        <begin position="19"/>
        <end position="366"/>
    </location>
</feature>
<feature type="binding site" evidence="1">
    <location>
        <position position="87"/>
    </location>
    <ligand>
        <name>Cu cation</name>
        <dbReference type="ChEBI" id="CHEBI:23378"/>
        <label>A</label>
    </ligand>
</feature>
<feature type="binding site" evidence="1">
    <location>
        <position position="96"/>
    </location>
    <ligand>
        <name>Cu cation</name>
        <dbReference type="ChEBI" id="CHEBI:23378"/>
        <label>A</label>
    </ligand>
</feature>
<feature type="binding site" evidence="1">
    <location>
        <position position="291"/>
    </location>
    <ligand>
        <name>Cu cation</name>
        <dbReference type="ChEBI" id="CHEBI:23378"/>
        <label>B</label>
    </ligand>
</feature>
<feature type="glycosylation site" description="N-linked (GlcNAc...) asparagine" evidence="3">
    <location>
        <position position="28"/>
    </location>
</feature>
<feature type="glycosylation site" description="N-linked (GlcNAc...) asparagine" evidence="3">
    <location>
        <position position="81"/>
    </location>
</feature>
<feature type="glycosylation site" description="N-linked (GlcNAc...) asparagine" evidence="3">
    <location>
        <position position="114"/>
    </location>
</feature>
<feature type="glycosylation site" description="N-linked (GlcNAc...) asparagine" evidence="3">
    <location>
        <position position="121"/>
    </location>
</feature>
<feature type="glycosylation site" description="N-linked (GlcNAc...) asparagine" evidence="3">
    <location>
        <position position="319"/>
    </location>
</feature>
<proteinExistence type="evidence at protein level"/>
<comment type="function">
    <text evidence="4 5 6 7 8 13">Nonribosomal peptide synthetase; part of the pathway that mediates the biosynthesis of the gray-brown conidiophore pigment (PubMed:23617571, PubMed:28108400). The first step of the pathway is performed by the nonribosomal peptide synthetase ivoA that catalyzes ATP-dependent unidirectional stereoinversion of L-tryptophan to D-tryptophan with complete conversion (PubMed:31573806). While the stereoinversion is catalyzed by the epimerization (E) domain of ivoA, the terminal condensation (C) domain stereoselectively hydrolyzes D-tryptophanyl-S-phosphopantetheine thioester and thus represents a non-canonical C domain function (PubMed:31573806). D-tryptophan is acetylated, probably by an endogenous acetyltransferase (Probable). N-acetyltryptophan is further 6-hydroxylated into N-acetyl-6-hydroxytryptophan (AHT) by the cytochrome P450 monooxygenase ivoC (PubMed:28108400). N-acetyl-6-hydroxytryptophan is substrate of the N-acetyl-6-hydroxytryptophan oxidase ivoB to produce the gray-brown conidiophore pigment (PubMed:2126551, PubMed:28108400, Ref.4).</text>
</comment>
<comment type="cofactor">
    <cofactor evidence="1">
        <name>Cu(2+)</name>
        <dbReference type="ChEBI" id="CHEBI:29036"/>
    </cofactor>
    <text evidence="1">Binds 2 copper ions per subunit.</text>
</comment>
<comment type="activity regulation">
    <text evidence="4">Activity is inhibited by 2,3-dihydroxynaphthalene, phenylhydrazine, diethyl dithiocarbamate and 8-hydroxyquinolene (PubMed:2126551).</text>
</comment>
<comment type="biophysicochemical properties">
    <phDependence>
        <text evidence="4">Optimum pH is 7.0.</text>
    </phDependence>
</comment>
<comment type="pathway">
    <text evidence="4 6 8">Pigment biosynthesis.</text>
</comment>
<comment type="disruption phenotype">
    <text evidence="4">Impairs the production of the gray-brown conidiophore pigment and leads to 'ivory' (colorless) conidiophores and accumulation of N-acetyl-6-hydroxytryptophan (AHT) (PubMed:2126551).</text>
</comment>
<comment type="similarity">
    <text evidence="12">Belongs to the tyrosinase family.</text>
</comment>
<evidence type="ECO:0000250" key="1">
    <source>
        <dbReference type="UniProtKB" id="Q9ZP19"/>
    </source>
</evidence>
<evidence type="ECO:0000255" key="2"/>
<evidence type="ECO:0000255" key="3">
    <source>
        <dbReference type="PROSITE-ProRule" id="PRU00498"/>
    </source>
</evidence>
<evidence type="ECO:0000269" key="4">
    <source>
    </source>
</evidence>
<evidence type="ECO:0000269" key="5">
    <source>
    </source>
</evidence>
<evidence type="ECO:0000269" key="6">
    <source>
    </source>
</evidence>
<evidence type="ECO:0000269" key="7">
    <source>
    </source>
</evidence>
<evidence type="ECO:0000269" key="8">
    <source ref="4"/>
</evidence>
<evidence type="ECO:0000303" key="9">
    <source>
    </source>
</evidence>
<evidence type="ECO:0000303" key="10">
    <source>
    </source>
</evidence>
<evidence type="ECO:0000303" key="11">
    <source ref="4"/>
</evidence>
<evidence type="ECO:0000305" key="12"/>
<evidence type="ECO:0000305" key="13">
    <source>
    </source>
</evidence>
<accession>Q5BGU9</accession>
<accession>C8VUM5</accession>